<sequence length="231" mass="25551">MWAWALLPICLTVWATGGIWIVYAMSVSNGSVNLSDGFPYISVSGTYPPQSCVFGQVLNVGAMLAVWISVIRFQQIRDYNCHSVLNSVSLATGILCALGTSIVGNFQQSNQLQTHLAGAFLAFIIGNVYFWMQTALTYMVKPKHGGCYIGPIRFCLSIACTALIVAMAVFLKMNMKSVSAICEWIVAMILFLLYGLFAVDFWHLDGHFFHVKKRRTVIPNEMEVSTVTLSI</sequence>
<dbReference type="EMBL" id="BC097732">
    <property type="protein sequence ID" value="AAH97732.1"/>
    <property type="molecule type" value="mRNA"/>
</dbReference>
<dbReference type="RefSeq" id="NP_001090042.1">
    <property type="nucleotide sequence ID" value="NM_001096573.1"/>
</dbReference>
<dbReference type="GlyCosmos" id="Q4V7T3">
    <property type="glycosylation" value="2 sites, No reported glycans"/>
</dbReference>
<dbReference type="DNASU" id="735115"/>
<dbReference type="GeneID" id="735115"/>
<dbReference type="KEGG" id="xla:735115"/>
<dbReference type="AGR" id="Xenbase:XB-GENE-6254290"/>
<dbReference type="CTD" id="735115"/>
<dbReference type="Xenbase" id="XB-GENE-6254290">
    <property type="gene designation" value="tmem150b.L"/>
</dbReference>
<dbReference type="OrthoDB" id="191706at2759"/>
<dbReference type="Proteomes" id="UP000186698">
    <property type="component" value="Chromosome 7L"/>
</dbReference>
<dbReference type="Bgee" id="735115">
    <property type="expression patterns" value="Expressed in intestine and 5 other cell types or tissues"/>
</dbReference>
<dbReference type="GO" id="GO:0000421">
    <property type="term" value="C:autophagosome membrane"/>
    <property type="evidence" value="ECO:0007669"/>
    <property type="project" value="UniProtKB-SubCell"/>
</dbReference>
<dbReference type="GO" id="GO:0010008">
    <property type="term" value="C:endosome membrane"/>
    <property type="evidence" value="ECO:0007669"/>
    <property type="project" value="UniProtKB-SubCell"/>
</dbReference>
<dbReference type="GO" id="GO:0005886">
    <property type="term" value="C:plasma membrane"/>
    <property type="evidence" value="ECO:0000250"/>
    <property type="project" value="UniProtKB"/>
</dbReference>
<dbReference type="GO" id="GO:0006914">
    <property type="term" value="P:autophagy"/>
    <property type="evidence" value="ECO:0007669"/>
    <property type="project" value="UniProtKB-KW"/>
</dbReference>
<dbReference type="InterPro" id="IPR050911">
    <property type="entry name" value="DRAM/TMEM150_Autophagy_Mod"/>
</dbReference>
<dbReference type="InterPro" id="IPR019402">
    <property type="entry name" value="Frag1/DRAM/Sfk1"/>
</dbReference>
<dbReference type="PANTHER" id="PTHR21324">
    <property type="entry name" value="FASTING-INDUCIBLE INTEGRAL MEMBRANE PROTEIN TM6P1-RELATED"/>
    <property type="match status" value="1"/>
</dbReference>
<dbReference type="PANTHER" id="PTHR21324:SF3">
    <property type="entry name" value="MODULATOR OF MACROAUTOPHAGY TMEM150B"/>
    <property type="match status" value="1"/>
</dbReference>
<dbReference type="Pfam" id="PF10277">
    <property type="entry name" value="Frag1"/>
    <property type="match status" value="1"/>
</dbReference>
<accession>Q4V7T3</accession>
<reference key="1">
    <citation type="submission" date="2005-06" db="EMBL/GenBank/DDBJ databases">
        <authorList>
            <consortium name="NIH - Xenopus Gene Collection (XGC) project"/>
        </authorList>
    </citation>
    <scope>NUCLEOTIDE SEQUENCE [LARGE SCALE MRNA]</scope>
    <source>
        <tissue>Embryo</tissue>
    </source>
</reference>
<name>T15BB_XENLA</name>
<comment type="function">
    <text evidence="1">Modulator of macroautophagy that causes accumulation of autophagosomes under basal conditions and enhances autophagic flux (By similarity). Represses cell death and promotes long-term clonogenic survival of cells grown in the absence of glucose in a macroautophagy-independent manner (By similarity). May have some role in extracellular matrix engulfment or growth factor receptor recycling, both of which can modulate cell survival (By similarity).</text>
</comment>
<comment type="subcellular location">
    <subcellularLocation>
        <location evidence="1">Cell membrane</location>
        <topology evidence="1">Multi-pass membrane protein</topology>
    </subcellularLocation>
    <subcellularLocation>
        <location evidence="1">Endosome membrane</location>
        <topology evidence="3">Multi-pass membrane protein</topology>
    </subcellularLocation>
    <subcellularLocation>
        <location evidence="1">Cytoplasmic vesicle</location>
        <location evidence="1">Autophagosome membrane</location>
        <topology evidence="3">Multi-pass membrane protein</topology>
    </subcellularLocation>
</comment>
<comment type="similarity">
    <text evidence="4">Belongs to the DRAM/TMEM150 family.</text>
</comment>
<organism>
    <name type="scientific">Xenopus laevis</name>
    <name type="common">African clawed frog</name>
    <dbReference type="NCBI Taxonomy" id="8355"/>
    <lineage>
        <taxon>Eukaryota</taxon>
        <taxon>Metazoa</taxon>
        <taxon>Chordata</taxon>
        <taxon>Craniata</taxon>
        <taxon>Vertebrata</taxon>
        <taxon>Euteleostomi</taxon>
        <taxon>Amphibia</taxon>
        <taxon>Batrachia</taxon>
        <taxon>Anura</taxon>
        <taxon>Pipoidea</taxon>
        <taxon>Pipidae</taxon>
        <taxon>Xenopodinae</taxon>
        <taxon>Xenopus</taxon>
        <taxon>Xenopus</taxon>
    </lineage>
</organism>
<feature type="chain" id="PRO_0000349288" description="Modulator of macroautophagy TMEM150B-B">
    <location>
        <begin position="1"/>
        <end position="231"/>
    </location>
</feature>
<feature type="topological domain" description="Cytoplasmic" evidence="4">
    <location>
        <position position="1"/>
    </location>
</feature>
<feature type="transmembrane region" description="Helical" evidence="3">
    <location>
        <begin position="2"/>
        <end position="22"/>
    </location>
</feature>
<feature type="topological domain" description="Extracellular" evidence="4">
    <location>
        <begin position="23"/>
        <end position="50"/>
    </location>
</feature>
<feature type="transmembrane region" description="Helical" evidence="3">
    <location>
        <begin position="51"/>
        <end position="71"/>
    </location>
</feature>
<feature type="topological domain" description="Cytoplasmic" evidence="4">
    <location>
        <begin position="72"/>
        <end position="83"/>
    </location>
</feature>
<feature type="transmembrane region" description="Helical" evidence="3">
    <location>
        <begin position="84"/>
        <end position="104"/>
    </location>
</feature>
<feature type="topological domain" description="Extracellular" evidence="4">
    <location>
        <begin position="105"/>
        <end position="115"/>
    </location>
</feature>
<feature type="transmembrane region" description="Helical" evidence="3">
    <location>
        <begin position="116"/>
        <end position="136"/>
    </location>
</feature>
<feature type="topological domain" description="Cytoplasmic" evidence="4">
    <location>
        <begin position="137"/>
        <end position="150"/>
    </location>
</feature>
<feature type="transmembrane region" description="Helical" evidence="3">
    <location>
        <begin position="151"/>
        <end position="171"/>
    </location>
</feature>
<feature type="topological domain" description="Extracellular" evidence="4">
    <location>
        <begin position="172"/>
        <end position="183"/>
    </location>
</feature>
<feature type="transmembrane region" description="Helical" evidence="3">
    <location>
        <begin position="184"/>
        <end position="204"/>
    </location>
</feature>
<feature type="topological domain" description="Cytoplasmic" evidence="2">
    <location>
        <begin position="205"/>
        <end position="231"/>
    </location>
</feature>
<feature type="glycosylation site" description="N-linked (GlcNAc...) asparagine" evidence="3">
    <location>
        <position position="29"/>
    </location>
</feature>
<feature type="glycosylation site" description="N-linked (GlcNAc...) asparagine" evidence="3">
    <location>
        <position position="33"/>
    </location>
</feature>
<protein>
    <recommendedName>
        <fullName evidence="4">Modulator of macroautophagy TMEM150B-B</fullName>
    </recommendedName>
    <alternativeName>
        <fullName evidence="1">Transmembrane protein 150B-B</fullName>
    </alternativeName>
</protein>
<gene>
    <name evidence="1" type="primary">tmem150b-b</name>
</gene>
<evidence type="ECO:0000250" key="1">
    <source>
        <dbReference type="UniProtKB" id="A6NC51"/>
    </source>
</evidence>
<evidence type="ECO:0000250" key="2">
    <source>
        <dbReference type="UniProtKB" id="Q86TG1"/>
    </source>
</evidence>
<evidence type="ECO:0000255" key="3"/>
<evidence type="ECO:0000305" key="4"/>
<proteinExistence type="evidence at transcript level"/>
<keyword id="KW-0072">Autophagy</keyword>
<keyword id="KW-1003">Cell membrane</keyword>
<keyword id="KW-0968">Cytoplasmic vesicle</keyword>
<keyword id="KW-0967">Endosome</keyword>
<keyword id="KW-0325">Glycoprotein</keyword>
<keyword id="KW-0472">Membrane</keyword>
<keyword id="KW-1185">Reference proteome</keyword>
<keyword id="KW-0812">Transmembrane</keyword>
<keyword id="KW-1133">Transmembrane helix</keyword>